<protein>
    <recommendedName>
        <fullName evidence="1">Ribosomal RNA small subunit methyltransferase A</fullName>
        <ecNumber evidence="1">2.1.1.182</ecNumber>
    </recommendedName>
    <alternativeName>
        <fullName evidence="1">16S rRNA (adenine(1518)-N(6)/adenine(1519)-N(6))-dimethyltransferase</fullName>
    </alternativeName>
    <alternativeName>
        <fullName evidence="1">16S rRNA dimethyladenosine transferase</fullName>
    </alternativeName>
    <alternativeName>
        <fullName evidence="1">16S rRNA dimethylase</fullName>
    </alternativeName>
    <alternativeName>
        <fullName evidence="1">S-adenosylmethionine-6-N', N'-adenosyl(rRNA) dimethyltransferase</fullName>
    </alternativeName>
</protein>
<sequence length="260" mass="29898">MKTSDYLKKYGVKLKKHLGQVFLSDDRIAKRIVKEVGLTPEDVVVEIGAGAGTLTEELAKTGARVIAYEIDESLAPVLRERLSKYPNVELRFEDFLKAKDIPEGAICVSNIPYSITGPIMEKIIEWKFKRAIVMVQKEVGERILAKPGKKTYGYLSVVVQTFYEVKKLFDVSRSCFVPNPEVDSTVVDLRRKSVDLDFEKFRKFVSMIFAKKRKTLKNNLRPFLSVFEGVDLSRRAEQLTVEEIVEFYEKWRRALECSKE</sequence>
<evidence type="ECO:0000255" key="1">
    <source>
        <dbReference type="HAMAP-Rule" id="MF_00607"/>
    </source>
</evidence>
<gene>
    <name evidence="1" type="primary">rsmA</name>
    <name evidence="1" type="synonym">ksgA</name>
    <name type="ordered locus">Tpet_1357</name>
</gene>
<proteinExistence type="inferred from homology"/>
<accession>A5IME8</accession>
<comment type="function">
    <text evidence="1">Specifically dimethylates two adjacent adenosines (A1518 and A1519) in the loop of a conserved hairpin near the 3'-end of 16S rRNA in the 30S particle. May play a critical role in biogenesis of 30S subunits.</text>
</comment>
<comment type="catalytic activity">
    <reaction evidence="1">
        <text>adenosine(1518)/adenosine(1519) in 16S rRNA + 4 S-adenosyl-L-methionine = N(6)-dimethyladenosine(1518)/N(6)-dimethyladenosine(1519) in 16S rRNA + 4 S-adenosyl-L-homocysteine + 4 H(+)</text>
        <dbReference type="Rhea" id="RHEA:19609"/>
        <dbReference type="Rhea" id="RHEA-COMP:10232"/>
        <dbReference type="Rhea" id="RHEA-COMP:10233"/>
        <dbReference type="ChEBI" id="CHEBI:15378"/>
        <dbReference type="ChEBI" id="CHEBI:57856"/>
        <dbReference type="ChEBI" id="CHEBI:59789"/>
        <dbReference type="ChEBI" id="CHEBI:74411"/>
        <dbReference type="ChEBI" id="CHEBI:74493"/>
        <dbReference type="EC" id="2.1.1.182"/>
    </reaction>
</comment>
<comment type="subcellular location">
    <subcellularLocation>
        <location evidence="1">Cytoplasm</location>
    </subcellularLocation>
</comment>
<comment type="similarity">
    <text evidence="1">Belongs to the class I-like SAM-binding methyltransferase superfamily. rRNA adenine N(6)-methyltransferase family. RsmA subfamily.</text>
</comment>
<feature type="chain" id="PRO_1000056686" description="Ribosomal RNA small subunit methyltransferase A">
    <location>
        <begin position="1"/>
        <end position="260"/>
    </location>
</feature>
<feature type="binding site" evidence="1">
    <location>
        <position position="23"/>
    </location>
    <ligand>
        <name>S-adenosyl-L-methionine</name>
        <dbReference type="ChEBI" id="CHEBI:59789"/>
    </ligand>
</feature>
<feature type="binding site" evidence="1">
    <location>
        <position position="48"/>
    </location>
    <ligand>
        <name>S-adenosyl-L-methionine</name>
        <dbReference type="ChEBI" id="CHEBI:59789"/>
    </ligand>
</feature>
<feature type="binding site" evidence="1">
    <location>
        <position position="69"/>
    </location>
    <ligand>
        <name>S-adenosyl-L-methionine</name>
        <dbReference type="ChEBI" id="CHEBI:59789"/>
    </ligand>
</feature>
<feature type="binding site" evidence="1">
    <location>
        <position position="94"/>
    </location>
    <ligand>
        <name>S-adenosyl-L-methionine</name>
        <dbReference type="ChEBI" id="CHEBI:59789"/>
    </ligand>
</feature>
<feature type="binding site" evidence="1">
    <location>
        <position position="110"/>
    </location>
    <ligand>
        <name>S-adenosyl-L-methionine</name>
        <dbReference type="ChEBI" id="CHEBI:59789"/>
    </ligand>
</feature>
<dbReference type="EC" id="2.1.1.182" evidence="1"/>
<dbReference type="EMBL" id="CP000702">
    <property type="protein sequence ID" value="ABQ47371.1"/>
    <property type="molecule type" value="Genomic_DNA"/>
</dbReference>
<dbReference type="RefSeq" id="WP_011943830.1">
    <property type="nucleotide sequence ID" value="NC_009486.1"/>
</dbReference>
<dbReference type="SMR" id="A5IME8"/>
<dbReference type="STRING" id="390874.Tpet_1357"/>
<dbReference type="KEGG" id="tpt:Tpet_1357"/>
<dbReference type="eggNOG" id="COG0030">
    <property type="taxonomic scope" value="Bacteria"/>
</dbReference>
<dbReference type="HOGENOM" id="CLU_041220_0_0_0"/>
<dbReference type="Proteomes" id="UP000006558">
    <property type="component" value="Chromosome"/>
</dbReference>
<dbReference type="GO" id="GO:0005829">
    <property type="term" value="C:cytosol"/>
    <property type="evidence" value="ECO:0007669"/>
    <property type="project" value="TreeGrafter"/>
</dbReference>
<dbReference type="GO" id="GO:0052908">
    <property type="term" value="F:16S rRNA (adenine(1518)-N(6)/adenine(1519)-N(6))-dimethyltransferase activity"/>
    <property type="evidence" value="ECO:0007669"/>
    <property type="project" value="UniProtKB-EC"/>
</dbReference>
<dbReference type="GO" id="GO:0003723">
    <property type="term" value="F:RNA binding"/>
    <property type="evidence" value="ECO:0007669"/>
    <property type="project" value="UniProtKB-KW"/>
</dbReference>
<dbReference type="CDD" id="cd02440">
    <property type="entry name" value="AdoMet_MTases"/>
    <property type="match status" value="1"/>
</dbReference>
<dbReference type="FunFam" id="3.40.50.150:FF:000023">
    <property type="entry name" value="Ribosomal RNA small subunit methyltransferase A"/>
    <property type="match status" value="1"/>
</dbReference>
<dbReference type="Gene3D" id="1.10.8.100">
    <property type="entry name" value="Ribosomal RNA adenine dimethylase-like, domain 2"/>
    <property type="match status" value="1"/>
</dbReference>
<dbReference type="Gene3D" id="3.40.50.150">
    <property type="entry name" value="Vaccinia Virus protein VP39"/>
    <property type="match status" value="1"/>
</dbReference>
<dbReference type="HAMAP" id="MF_00607">
    <property type="entry name" value="16SrRNA_methyltr_A"/>
    <property type="match status" value="1"/>
</dbReference>
<dbReference type="InterPro" id="IPR001737">
    <property type="entry name" value="KsgA/Erm"/>
</dbReference>
<dbReference type="InterPro" id="IPR023165">
    <property type="entry name" value="rRNA_Ade_diMease-like_C"/>
</dbReference>
<dbReference type="InterPro" id="IPR020596">
    <property type="entry name" value="rRNA_Ade_Mease_Trfase_CS"/>
</dbReference>
<dbReference type="InterPro" id="IPR020598">
    <property type="entry name" value="rRNA_Ade_methylase_Trfase_N"/>
</dbReference>
<dbReference type="InterPro" id="IPR011530">
    <property type="entry name" value="rRNA_adenine_dimethylase"/>
</dbReference>
<dbReference type="InterPro" id="IPR029063">
    <property type="entry name" value="SAM-dependent_MTases_sf"/>
</dbReference>
<dbReference type="NCBIfam" id="TIGR00755">
    <property type="entry name" value="ksgA"/>
    <property type="match status" value="1"/>
</dbReference>
<dbReference type="PANTHER" id="PTHR11727">
    <property type="entry name" value="DIMETHYLADENOSINE TRANSFERASE"/>
    <property type="match status" value="1"/>
</dbReference>
<dbReference type="PANTHER" id="PTHR11727:SF7">
    <property type="entry name" value="DIMETHYLADENOSINE TRANSFERASE-RELATED"/>
    <property type="match status" value="1"/>
</dbReference>
<dbReference type="Pfam" id="PF00398">
    <property type="entry name" value="RrnaAD"/>
    <property type="match status" value="1"/>
</dbReference>
<dbReference type="SMART" id="SM00650">
    <property type="entry name" value="rADc"/>
    <property type="match status" value="1"/>
</dbReference>
<dbReference type="SUPFAM" id="SSF53335">
    <property type="entry name" value="S-adenosyl-L-methionine-dependent methyltransferases"/>
    <property type="match status" value="1"/>
</dbReference>
<dbReference type="PROSITE" id="PS01131">
    <property type="entry name" value="RRNA_A_DIMETH"/>
    <property type="match status" value="1"/>
</dbReference>
<dbReference type="PROSITE" id="PS51689">
    <property type="entry name" value="SAM_RNA_A_N6_MT"/>
    <property type="match status" value="1"/>
</dbReference>
<reference key="1">
    <citation type="submission" date="2007-05" db="EMBL/GenBank/DDBJ databases">
        <title>Complete sequence of Thermotoga petrophila RKU-1.</title>
        <authorList>
            <consortium name="US DOE Joint Genome Institute"/>
            <person name="Copeland A."/>
            <person name="Lucas S."/>
            <person name="Lapidus A."/>
            <person name="Barry K."/>
            <person name="Glavina del Rio T."/>
            <person name="Dalin E."/>
            <person name="Tice H."/>
            <person name="Pitluck S."/>
            <person name="Sims D."/>
            <person name="Brettin T."/>
            <person name="Bruce D."/>
            <person name="Detter J.C."/>
            <person name="Han C."/>
            <person name="Tapia R."/>
            <person name="Schmutz J."/>
            <person name="Larimer F."/>
            <person name="Land M."/>
            <person name="Hauser L."/>
            <person name="Kyrpides N."/>
            <person name="Mikhailova N."/>
            <person name="Nelson K."/>
            <person name="Gogarten J.P."/>
            <person name="Noll K."/>
            <person name="Richardson P."/>
        </authorList>
    </citation>
    <scope>NUCLEOTIDE SEQUENCE [LARGE SCALE GENOMIC DNA]</scope>
    <source>
        <strain>ATCC BAA-488 / DSM 13995 / JCM 10881 / RKU-1</strain>
    </source>
</reference>
<keyword id="KW-0963">Cytoplasm</keyword>
<keyword id="KW-0489">Methyltransferase</keyword>
<keyword id="KW-0694">RNA-binding</keyword>
<keyword id="KW-0698">rRNA processing</keyword>
<keyword id="KW-0949">S-adenosyl-L-methionine</keyword>
<keyword id="KW-0808">Transferase</keyword>
<organism>
    <name type="scientific">Thermotoga petrophila (strain ATCC BAA-488 / DSM 13995 / JCM 10881 / RKU-1)</name>
    <dbReference type="NCBI Taxonomy" id="390874"/>
    <lineage>
        <taxon>Bacteria</taxon>
        <taxon>Thermotogati</taxon>
        <taxon>Thermotogota</taxon>
        <taxon>Thermotogae</taxon>
        <taxon>Thermotogales</taxon>
        <taxon>Thermotogaceae</taxon>
        <taxon>Thermotoga</taxon>
    </lineage>
</organism>
<name>RSMA_THEP1</name>